<dbReference type="EC" id="4.2.3.3" evidence="1"/>
<dbReference type="EMBL" id="AE001437">
    <property type="protein sequence ID" value="AAK79571.1"/>
    <property type="status" value="ALT_INIT"/>
    <property type="molecule type" value="Genomic_DNA"/>
</dbReference>
<dbReference type="PIR" id="H97097">
    <property type="entry name" value="H97097"/>
</dbReference>
<dbReference type="RefSeq" id="NP_348231.1">
    <property type="nucleotide sequence ID" value="NC_003030.1"/>
</dbReference>
<dbReference type="SMR" id="Q97IN6"/>
<dbReference type="STRING" id="272562.CA_C1604"/>
<dbReference type="KEGG" id="cac:CA_C1604"/>
<dbReference type="PATRIC" id="fig|272562.8.peg.1803"/>
<dbReference type="eggNOG" id="COG1803">
    <property type="taxonomic scope" value="Bacteria"/>
</dbReference>
<dbReference type="HOGENOM" id="CLU_120420_0_1_9"/>
<dbReference type="OrthoDB" id="9787147at2"/>
<dbReference type="Proteomes" id="UP000000814">
    <property type="component" value="Chromosome"/>
</dbReference>
<dbReference type="GO" id="GO:0005829">
    <property type="term" value="C:cytosol"/>
    <property type="evidence" value="ECO:0007669"/>
    <property type="project" value="TreeGrafter"/>
</dbReference>
<dbReference type="GO" id="GO:0008929">
    <property type="term" value="F:methylglyoxal synthase activity"/>
    <property type="evidence" value="ECO:0007669"/>
    <property type="project" value="UniProtKB-UniRule"/>
</dbReference>
<dbReference type="GO" id="GO:0019242">
    <property type="term" value="P:methylglyoxal biosynthetic process"/>
    <property type="evidence" value="ECO:0007669"/>
    <property type="project" value="UniProtKB-UniRule"/>
</dbReference>
<dbReference type="CDD" id="cd01422">
    <property type="entry name" value="MGS"/>
    <property type="match status" value="1"/>
</dbReference>
<dbReference type="Gene3D" id="3.40.50.1380">
    <property type="entry name" value="Methylglyoxal synthase-like domain"/>
    <property type="match status" value="1"/>
</dbReference>
<dbReference type="HAMAP" id="MF_00549">
    <property type="entry name" value="Methylglyoxal_synth"/>
    <property type="match status" value="1"/>
</dbReference>
<dbReference type="InterPro" id="IPR004363">
    <property type="entry name" value="Methylgl_synth"/>
</dbReference>
<dbReference type="InterPro" id="IPR018148">
    <property type="entry name" value="Methylglyoxal_synth_AS"/>
</dbReference>
<dbReference type="InterPro" id="IPR011607">
    <property type="entry name" value="MGS-like_dom"/>
</dbReference>
<dbReference type="InterPro" id="IPR036914">
    <property type="entry name" value="MGS-like_dom_sf"/>
</dbReference>
<dbReference type="NCBIfam" id="TIGR00160">
    <property type="entry name" value="MGSA"/>
    <property type="match status" value="1"/>
</dbReference>
<dbReference type="NCBIfam" id="NF003559">
    <property type="entry name" value="PRK05234.1"/>
    <property type="match status" value="1"/>
</dbReference>
<dbReference type="PANTHER" id="PTHR30492">
    <property type="entry name" value="METHYLGLYOXAL SYNTHASE"/>
    <property type="match status" value="1"/>
</dbReference>
<dbReference type="PANTHER" id="PTHR30492:SF0">
    <property type="entry name" value="METHYLGLYOXAL SYNTHASE"/>
    <property type="match status" value="1"/>
</dbReference>
<dbReference type="Pfam" id="PF02142">
    <property type="entry name" value="MGS"/>
    <property type="match status" value="1"/>
</dbReference>
<dbReference type="PIRSF" id="PIRSF006614">
    <property type="entry name" value="Methylglyox_syn"/>
    <property type="match status" value="1"/>
</dbReference>
<dbReference type="SMART" id="SM00851">
    <property type="entry name" value="MGS"/>
    <property type="match status" value="1"/>
</dbReference>
<dbReference type="SUPFAM" id="SSF52335">
    <property type="entry name" value="Methylglyoxal synthase-like"/>
    <property type="match status" value="1"/>
</dbReference>
<dbReference type="PROSITE" id="PS01335">
    <property type="entry name" value="METHYLGLYOXAL_SYNTH"/>
    <property type="match status" value="1"/>
</dbReference>
<dbReference type="PROSITE" id="PS51855">
    <property type="entry name" value="MGS"/>
    <property type="match status" value="1"/>
</dbReference>
<protein>
    <recommendedName>
        <fullName evidence="1">Methylglyoxal synthase</fullName>
        <shortName evidence="1">MGS</shortName>
        <ecNumber evidence="1">4.2.3.3</ecNumber>
    </recommendedName>
</protein>
<reference key="1">
    <citation type="journal article" date="2001" name="J. Bacteriol.">
        <title>Genome sequence and comparative analysis of the solvent-producing bacterium Clostridium acetobutylicum.</title>
        <authorList>
            <person name="Noelling J."/>
            <person name="Breton G."/>
            <person name="Omelchenko M.V."/>
            <person name="Makarova K.S."/>
            <person name="Zeng Q."/>
            <person name="Gibson R."/>
            <person name="Lee H.M."/>
            <person name="Dubois J."/>
            <person name="Qiu D."/>
            <person name="Hitti J."/>
            <person name="Wolf Y.I."/>
            <person name="Tatusov R.L."/>
            <person name="Sabathe F."/>
            <person name="Doucette-Stamm L.A."/>
            <person name="Soucaille P."/>
            <person name="Daly M.J."/>
            <person name="Bennett G.N."/>
            <person name="Koonin E.V."/>
            <person name="Smith D.R."/>
        </authorList>
    </citation>
    <scope>NUCLEOTIDE SEQUENCE [LARGE SCALE GENOMIC DNA]</scope>
    <source>
        <strain>ATCC 824 / DSM 792 / JCM 1419 / IAM 19013 / LMG 5710 / NBRC 13948 / NRRL B-527 / VKM B-1787 / 2291 / W</strain>
    </source>
</reference>
<name>MGSA_CLOAB</name>
<proteinExistence type="inferred from homology"/>
<accession>Q97IN6</accession>
<gene>
    <name evidence="1" type="primary">mgsA</name>
    <name type="ordered locus">CA_C1604</name>
</gene>
<feature type="chain" id="PRO_0000178621" description="Methylglyoxal synthase">
    <location>
        <begin position="1"/>
        <end position="145"/>
    </location>
</feature>
<feature type="domain" description="MGS-like" evidence="1">
    <location>
        <begin position="1"/>
        <end position="145"/>
    </location>
</feature>
<feature type="active site" description="Proton donor/acceptor" evidence="1">
    <location>
        <position position="64"/>
    </location>
</feature>
<feature type="binding site" evidence="1">
    <location>
        <position position="12"/>
    </location>
    <ligand>
        <name>substrate</name>
    </ligand>
</feature>
<feature type="binding site" evidence="1">
    <location>
        <position position="16"/>
    </location>
    <ligand>
        <name>substrate</name>
    </ligand>
</feature>
<feature type="binding site" evidence="1">
    <location>
        <begin position="38"/>
        <end position="41"/>
    </location>
    <ligand>
        <name>substrate</name>
    </ligand>
</feature>
<feature type="binding site" evidence="1">
    <location>
        <begin position="58"/>
        <end position="59"/>
    </location>
    <ligand>
        <name>substrate</name>
    </ligand>
</feature>
<feature type="binding site" evidence="1">
    <location>
        <position position="91"/>
    </location>
    <ligand>
        <name>substrate</name>
    </ligand>
</feature>
<sequence length="145" mass="16377">MNSKKKIALVAHDNRKKALISWCEANSEVLSNHSLCGTGTTAKLIKEATGLEVFPYKSGPMGGDQQIGAAIVNEDIDFMIFFWDPLTAQPHDPDVKALLRISVLYDIPIAMNESTAEFLIKSPIMKEQHERHIIDYYQKIRKDNF</sequence>
<organism>
    <name type="scientific">Clostridium acetobutylicum (strain ATCC 824 / DSM 792 / JCM 1419 / IAM 19013 / LMG 5710 / NBRC 13948 / NRRL B-527 / VKM B-1787 / 2291 / W)</name>
    <dbReference type="NCBI Taxonomy" id="272562"/>
    <lineage>
        <taxon>Bacteria</taxon>
        <taxon>Bacillati</taxon>
        <taxon>Bacillota</taxon>
        <taxon>Clostridia</taxon>
        <taxon>Eubacteriales</taxon>
        <taxon>Clostridiaceae</taxon>
        <taxon>Clostridium</taxon>
    </lineage>
</organism>
<keyword id="KW-0456">Lyase</keyword>
<keyword id="KW-1185">Reference proteome</keyword>
<evidence type="ECO:0000255" key="1">
    <source>
        <dbReference type="HAMAP-Rule" id="MF_00549"/>
    </source>
</evidence>
<evidence type="ECO:0000305" key="2"/>
<comment type="function">
    <text evidence="1">Catalyzes the formation of methylglyoxal from dihydroxyacetone phosphate.</text>
</comment>
<comment type="catalytic activity">
    <reaction evidence="1">
        <text>dihydroxyacetone phosphate = methylglyoxal + phosphate</text>
        <dbReference type="Rhea" id="RHEA:17937"/>
        <dbReference type="ChEBI" id="CHEBI:17158"/>
        <dbReference type="ChEBI" id="CHEBI:43474"/>
        <dbReference type="ChEBI" id="CHEBI:57642"/>
        <dbReference type="EC" id="4.2.3.3"/>
    </reaction>
</comment>
<comment type="similarity">
    <text evidence="1">Belongs to the methylglyoxal synthase family.</text>
</comment>
<comment type="sequence caution" evidence="2">
    <conflict type="erroneous initiation">
        <sequence resource="EMBL-CDS" id="AAK79571"/>
    </conflict>
</comment>